<evidence type="ECO:0000250" key="1"/>
<evidence type="ECO:0000255" key="2">
    <source>
        <dbReference type="PROSITE-ProRule" id="PRU00981"/>
    </source>
</evidence>
<keyword id="KW-0341">Growth regulation</keyword>
<keyword id="KW-1185">Reference proteome</keyword>
<keyword id="KW-0804">Transcription</keyword>
<keyword id="KW-0805">Transcription regulation</keyword>
<protein>
    <recommendedName>
        <fullName>Transcription factor ILI7</fullName>
    </recommendedName>
    <alternativeName>
        <fullName>Basic helix-loop-helix protein 173</fullName>
    </alternativeName>
    <alternativeName>
        <fullName>Protein INCREASED LEAF INCLINATION 7</fullName>
    </alternativeName>
    <alternativeName>
        <fullName>bHLH transcription factor bHLH173</fullName>
    </alternativeName>
</protein>
<dbReference type="EMBL" id="CM000135">
    <property type="protein sequence ID" value="EAY78414.1"/>
    <property type="molecule type" value="Genomic_DNA"/>
</dbReference>
<dbReference type="SMR" id="A2Z730"/>
<dbReference type="STRING" id="39946.A2Z730"/>
<dbReference type="EnsemblPlants" id="BGIOSGA032878-TA">
    <property type="protein sequence ID" value="BGIOSGA032878-PA"/>
    <property type="gene ID" value="BGIOSGA032878"/>
</dbReference>
<dbReference type="EnsemblPlants" id="OsGoSa_10g0010260.01">
    <property type="protein sequence ID" value="OsGoSa_10g0010260.01"/>
    <property type="gene ID" value="OsGoSa_10g0010260"/>
</dbReference>
<dbReference type="EnsemblPlants" id="OsIR64_10g0010090.01">
    <property type="protein sequence ID" value="OsIR64_10g0010090.01"/>
    <property type="gene ID" value="OsIR64_10g0010090"/>
</dbReference>
<dbReference type="EnsemblPlants" id="OsKYG_10g0009840.01">
    <property type="protein sequence ID" value="OsKYG_10g0009840.01"/>
    <property type="gene ID" value="OsKYG_10g0009840"/>
</dbReference>
<dbReference type="EnsemblPlants" id="OsLaMu_10g0010370.01">
    <property type="protein sequence ID" value="OsLaMu_10g0010370.01"/>
    <property type="gene ID" value="OsLaMu_10g0010370"/>
</dbReference>
<dbReference type="EnsemblPlants" id="OsLima_10g0009870.01">
    <property type="protein sequence ID" value="OsLima_10g0009870.01"/>
    <property type="gene ID" value="OsLima_10g0009870"/>
</dbReference>
<dbReference type="EnsemblPlants" id="OsLiXu_10g0009880.01">
    <property type="protein sequence ID" value="OsLiXu_10g0009880.01"/>
    <property type="gene ID" value="OsLiXu_10g0009880"/>
</dbReference>
<dbReference type="EnsemblPlants" id="OsMH63_10G009940_01">
    <property type="protein sequence ID" value="OsMH63_10G009940_01"/>
    <property type="gene ID" value="OsMH63_10G009940"/>
</dbReference>
<dbReference type="EnsemblPlants" id="OsPr106_10g0010060.01">
    <property type="protein sequence ID" value="OsPr106_10g0010060.01"/>
    <property type="gene ID" value="OsPr106_10g0010060"/>
</dbReference>
<dbReference type="EnsemblPlants" id="OsZS97_10G010200_01">
    <property type="protein sequence ID" value="OsZS97_10G010200_01"/>
    <property type="gene ID" value="OsZS97_10G010200"/>
</dbReference>
<dbReference type="Gramene" id="BGIOSGA032878-TA">
    <property type="protein sequence ID" value="BGIOSGA032878-PA"/>
    <property type="gene ID" value="BGIOSGA032878"/>
</dbReference>
<dbReference type="Gramene" id="OsGoSa_10g0010260.01">
    <property type="protein sequence ID" value="OsGoSa_10g0010260.01"/>
    <property type="gene ID" value="OsGoSa_10g0010260"/>
</dbReference>
<dbReference type="Gramene" id="OsIR64_10g0010090.01">
    <property type="protein sequence ID" value="OsIR64_10g0010090.01"/>
    <property type="gene ID" value="OsIR64_10g0010090"/>
</dbReference>
<dbReference type="Gramene" id="OsKYG_10g0009840.01">
    <property type="protein sequence ID" value="OsKYG_10g0009840.01"/>
    <property type="gene ID" value="OsKYG_10g0009840"/>
</dbReference>
<dbReference type="Gramene" id="OsLaMu_10g0010370.01">
    <property type="protein sequence ID" value="OsLaMu_10g0010370.01"/>
    <property type="gene ID" value="OsLaMu_10g0010370"/>
</dbReference>
<dbReference type="Gramene" id="OsLima_10g0009870.01">
    <property type="protein sequence ID" value="OsLima_10g0009870.01"/>
    <property type="gene ID" value="OsLima_10g0009870"/>
</dbReference>
<dbReference type="Gramene" id="OsLiXu_10g0009880.01">
    <property type="protein sequence ID" value="OsLiXu_10g0009880.01"/>
    <property type="gene ID" value="OsLiXu_10g0009880"/>
</dbReference>
<dbReference type="Gramene" id="OsMH63_10G009940_01">
    <property type="protein sequence ID" value="OsMH63_10G009940_01"/>
    <property type="gene ID" value="OsMH63_10G009940"/>
</dbReference>
<dbReference type="Gramene" id="OsPr106_10g0010060.01">
    <property type="protein sequence ID" value="OsPr106_10g0010060.01"/>
    <property type="gene ID" value="OsPr106_10g0010060"/>
</dbReference>
<dbReference type="Gramene" id="OsZS97_10G010200_01">
    <property type="protein sequence ID" value="OsZS97_10G010200_01"/>
    <property type="gene ID" value="OsZS97_10G010200"/>
</dbReference>
<dbReference type="HOGENOM" id="CLU_183267_0_0_1"/>
<dbReference type="OMA" id="ILPENQH"/>
<dbReference type="OrthoDB" id="988630at2759"/>
<dbReference type="Proteomes" id="UP000007015">
    <property type="component" value="Chromosome 10"/>
</dbReference>
<dbReference type="GO" id="GO:0046983">
    <property type="term" value="F:protein dimerization activity"/>
    <property type="evidence" value="ECO:0007669"/>
    <property type="project" value="InterPro"/>
</dbReference>
<dbReference type="GO" id="GO:0006355">
    <property type="term" value="P:regulation of DNA-templated transcription"/>
    <property type="evidence" value="ECO:0007669"/>
    <property type="project" value="InterPro"/>
</dbReference>
<dbReference type="GO" id="GO:0040008">
    <property type="term" value="P:regulation of growth"/>
    <property type="evidence" value="ECO:0007669"/>
    <property type="project" value="InterPro"/>
</dbReference>
<dbReference type="FunFam" id="4.10.280.10:FF:000082">
    <property type="entry name" value="Transcription factor ILI6"/>
    <property type="match status" value="1"/>
</dbReference>
<dbReference type="Gene3D" id="4.10.280.10">
    <property type="entry name" value="Helix-loop-helix DNA-binding domain"/>
    <property type="match status" value="1"/>
</dbReference>
<dbReference type="InterPro" id="IPR011598">
    <property type="entry name" value="bHLH_dom"/>
</dbReference>
<dbReference type="InterPro" id="IPR036638">
    <property type="entry name" value="HLH_DNA-bd_sf"/>
</dbReference>
<dbReference type="InterPro" id="IPR044293">
    <property type="entry name" value="PRE"/>
</dbReference>
<dbReference type="PANTHER" id="PTHR46446:SF37">
    <property type="entry name" value="TRANSCRIPTION FACTOR ILI7"/>
    <property type="match status" value="1"/>
</dbReference>
<dbReference type="PANTHER" id="PTHR46446">
    <property type="entry name" value="TRANSCRIPTION FACTOR PRE"/>
    <property type="match status" value="1"/>
</dbReference>
<dbReference type="Pfam" id="PF23174">
    <property type="entry name" value="bHLH_ILI"/>
    <property type="match status" value="1"/>
</dbReference>
<dbReference type="SUPFAM" id="SSF47459">
    <property type="entry name" value="HLH, helix-loop-helix DNA-binding domain"/>
    <property type="match status" value="1"/>
</dbReference>
<dbReference type="PROSITE" id="PS50888">
    <property type="entry name" value="BHLH"/>
    <property type="match status" value="1"/>
</dbReference>
<reference key="1">
    <citation type="journal article" date="2005" name="PLoS Biol.">
        <title>The genomes of Oryza sativa: a history of duplications.</title>
        <authorList>
            <person name="Yu J."/>
            <person name="Wang J."/>
            <person name="Lin W."/>
            <person name="Li S."/>
            <person name="Li H."/>
            <person name="Zhou J."/>
            <person name="Ni P."/>
            <person name="Dong W."/>
            <person name="Hu S."/>
            <person name="Zeng C."/>
            <person name="Zhang J."/>
            <person name="Zhang Y."/>
            <person name="Li R."/>
            <person name="Xu Z."/>
            <person name="Li S."/>
            <person name="Li X."/>
            <person name="Zheng H."/>
            <person name="Cong L."/>
            <person name="Lin L."/>
            <person name="Yin J."/>
            <person name="Geng J."/>
            <person name="Li G."/>
            <person name="Shi J."/>
            <person name="Liu J."/>
            <person name="Lv H."/>
            <person name="Li J."/>
            <person name="Wang J."/>
            <person name="Deng Y."/>
            <person name="Ran L."/>
            <person name="Shi X."/>
            <person name="Wang X."/>
            <person name="Wu Q."/>
            <person name="Li C."/>
            <person name="Ren X."/>
            <person name="Wang J."/>
            <person name="Wang X."/>
            <person name="Li D."/>
            <person name="Liu D."/>
            <person name="Zhang X."/>
            <person name="Ji Z."/>
            <person name="Zhao W."/>
            <person name="Sun Y."/>
            <person name="Zhang Z."/>
            <person name="Bao J."/>
            <person name="Han Y."/>
            <person name="Dong L."/>
            <person name="Ji J."/>
            <person name="Chen P."/>
            <person name="Wu S."/>
            <person name="Liu J."/>
            <person name="Xiao Y."/>
            <person name="Bu D."/>
            <person name="Tan J."/>
            <person name="Yang L."/>
            <person name="Ye C."/>
            <person name="Zhang J."/>
            <person name="Xu J."/>
            <person name="Zhou Y."/>
            <person name="Yu Y."/>
            <person name="Zhang B."/>
            <person name="Zhuang S."/>
            <person name="Wei H."/>
            <person name="Liu B."/>
            <person name="Lei M."/>
            <person name="Yu H."/>
            <person name="Li Y."/>
            <person name="Xu H."/>
            <person name="Wei S."/>
            <person name="He X."/>
            <person name="Fang L."/>
            <person name="Zhang Z."/>
            <person name="Zhang Y."/>
            <person name="Huang X."/>
            <person name="Su Z."/>
            <person name="Tong W."/>
            <person name="Li J."/>
            <person name="Tong Z."/>
            <person name="Li S."/>
            <person name="Ye J."/>
            <person name="Wang L."/>
            <person name="Fang L."/>
            <person name="Lei T."/>
            <person name="Chen C.-S."/>
            <person name="Chen H.-C."/>
            <person name="Xu Z."/>
            <person name="Li H."/>
            <person name="Huang H."/>
            <person name="Zhang F."/>
            <person name="Xu H."/>
            <person name="Li N."/>
            <person name="Zhao C."/>
            <person name="Li S."/>
            <person name="Dong L."/>
            <person name="Huang Y."/>
            <person name="Li L."/>
            <person name="Xi Y."/>
            <person name="Qi Q."/>
            <person name="Li W."/>
            <person name="Zhang B."/>
            <person name="Hu W."/>
            <person name="Zhang Y."/>
            <person name="Tian X."/>
            <person name="Jiao Y."/>
            <person name="Liang X."/>
            <person name="Jin J."/>
            <person name="Gao L."/>
            <person name="Zheng W."/>
            <person name="Hao B."/>
            <person name="Liu S.-M."/>
            <person name="Wang W."/>
            <person name="Yuan L."/>
            <person name="Cao M."/>
            <person name="McDermott J."/>
            <person name="Samudrala R."/>
            <person name="Wang J."/>
            <person name="Wong G.K.-S."/>
            <person name="Yang H."/>
        </authorList>
    </citation>
    <scope>NUCLEOTIDE SEQUENCE [LARGE SCALE GENOMIC DNA]</scope>
    <source>
        <strain>cv. 93-11</strain>
    </source>
</reference>
<proteinExistence type="inferred from homology"/>
<organism>
    <name type="scientific">Oryza sativa subsp. indica</name>
    <name type="common">Rice</name>
    <dbReference type="NCBI Taxonomy" id="39946"/>
    <lineage>
        <taxon>Eukaryota</taxon>
        <taxon>Viridiplantae</taxon>
        <taxon>Streptophyta</taxon>
        <taxon>Embryophyta</taxon>
        <taxon>Tracheophyta</taxon>
        <taxon>Spermatophyta</taxon>
        <taxon>Magnoliopsida</taxon>
        <taxon>Liliopsida</taxon>
        <taxon>Poales</taxon>
        <taxon>Poaceae</taxon>
        <taxon>BOP clade</taxon>
        <taxon>Oryzoideae</taxon>
        <taxon>Oryzeae</taxon>
        <taxon>Oryzinae</taxon>
        <taxon>Oryza</taxon>
        <taxon>Oryza sativa</taxon>
    </lineage>
</organism>
<sequence length="91" mass="9964">MSSRSRSRASSAARITDEQIGDLVSKLQALLPEARLRSNDRVPSARVLQETCSYIRSLHREVDDLSERLAELLAAADVSTAQAAVIRGLLM</sequence>
<feature type="chain" id="PRO_0000429101" description="Transcription factor ILI7">
    <location>
        <begin position="1"/>
        <end position="91"/>
    </location>
</feature>
<feature type="domain" description="bHLH" evidence="2">
    <location>
        <begin position="4"/>
        <end position="58"/>
    </location>
</feature>
<accession>A2Z730</accession>
<name>ILI7_ORYSI</name>
<comment type="function">
    <text evidence="1">Atypical and probable non DNA-binding bHLH transcription factor that integrates multiple signaling pathways to regulate cell elongation and plant development.</text>
</comment>
<comment type="similarity">
    <text>Belongs to the bHLH protein family.</text>
</comment>
<gene>
    <name type="primary">ILI7</name>
    <name type="synonym">BHLH173</name>
    <name type="ORF">OsI_33503</name>
</gene>